<accession>P14429</accession>
<keyword id="KW-0002">3D-structure</keyword>
<keyword id="KW-1015">Disulfide bond</keyword>
<keyword id="KW-0325">Glycoprotein</keyword>
<keyword id="KW-0391">Immunity</keyword>
<keyword id="KW-0472">Membrane</keyword>
<keyword id="KW-0490">MHC I</keyword>
<keyword id="KW-1185">Reference proteome</keyword>
<keyword id="KW-0732">Signal</keyword>
<keyword id="KW-0812">Transmembrane</keyword>
<keyword id="KW-1133">Transmembrane helix</keyword>
<protein>
    <recommendedName>
        <fullName>H-2 class I histocompatibility antigen, Q7 alpha chain</fullName>
    </recommendedName>
    <alternativeName>
        <fullName>QA-2 antigen</fullName>
    </alternativeName>
</protein>
<comment type="function">
    <text>Involved in the presentation of foreign antigens to the immune system.</text>
</comment>
<comment type="subunit">
    <text>Heterodimer of an alpha chain and a beta chain (beta-2-microglobulin).</text>
</comment>
<comment type="subcellular location">
    <subcellularLocation>
        <location>Membrane</location>
        <topology>Single-pass type I membrane protein</topology>
    </subcellularLocation>
</comment>
<comment type="similarity">
    <text evidence="4">Belongs to the MHC class I family.</text>
</comment>
<comment type="sequence caution" evidence="4">
    <conflict type="erroneous initiation">
        <sequence resource="EMBL-CDS" id="CAA28977"/>
    </conflict>
</comment>
<organism>
    <name type="scientific">Mus musculus</name>
    <name type="common">Mouse</name>
    <dbReference type="NCBI Taxonomy" id="10090"/>
    <lineage>
        <taxon>Eukaryota</taxon>
        <taxon>Metazoa</taxon>
        <taxon>Chordata</taxon>
        <taxon>Craniata</taxon>
        <taxon>Vertebrata</taxon>
        <taxon>Euteleostomi</taxon>
        <taxon>Mammalia</taxon>
        <taxon>Eutheria</taxon>
        <taxon>Euarchontoglires</taxon>
        <taxon>Glires</taxon>
        <taxon>Rodentia</taxon>
        <taxon>Myomorpha</taxon>
        <taxon>Muroidea</taxon>
        <taxon>Muridae</taxon>
        <taxon>Murinae</taxon>
        <taxon>Mus</taxon>
        <taxon>Mus</taxon>
    </lineage>
</organism>
<gene>
    <name type="primary">H2-Q7</name>
</gene>
<proteinExistence type="evidence at protein level"/>
<feature type="signal peptide" evidence="1">
    <location>
        <begin position="1"/>
        <end position="21"/>
    </location>
</feature>
<feature type="chain" id="PRO_0000018933" description="H-2 class I histocompatibility antigen, Q7 alpha chain">
    <location>
        <begin position="22"/>
        <end position="334"/>
    </location>
</feature>
<feature type="topological domain" description="Extracellular" evidence="2">
    <location>
        <begin position="22"/>
        <end position="310"/>
    </location>
</feature>
<feature type="transmembrane region" description="Helical" evidence="2">
    <location>
        <begin position="311"/>
        <end position="332"/>
    </location>
</feature>
<feature type="domain" description="Ig-like C1-type">
    <location>
        <begin position="206"/>
        <end position="294"/>
    </location>
</feature>
<feature type="region of interest" description="Alpha-1">
    <location>
        <begin position="22"/>
        <end position="111"/>
    </location>
</feature>
<feature type="region of interest" description="Alpha-2">
    <location>
        <begin position="112"/>
        <end position="203"/>
    </location>
</feature>
<feature type="region of interest" description="Alpha-3">
    <location>
        <begin position="204"/>
        <end position="295"/>
    </location>
</feature>
<feature type="region of interest" description="Connecting peptide">
    <location>
        <begin position="296"/>
        <end position="310"/>
    </location>
</feature>
<feature type="glycosylation site" description="N-linked (GlcNAc...) asparagine" evidence="2">
    <location>
        <position position="107"/>
    </location>
</feature>
<feature type="glycosylation site" description="N-linked (GlcNAc...) asparagine" evidence="2">
    <location>
        <position position="277"/>
    </location>
</feature>
<feature type="disulfide bond" evidence="3">
    <location>
        <begin position="122"/>
        <end position="185"/>
    </location>
</feature>
<feature type="disulfide bond" evidence="3">
    <location>
        <begin position="224"/>
        <end position="280"/>
    </location>
</feature>
<feature type="sequence conflict" description="In Ref. 3." evidence="4" ref="3">
    <original>I</original>
    <variation>M</variation>
    <location>
        <position position="87"/>
    </location>
</feature>
<feature type="strand" evidence="5">
    <location>
        <begin position="24"/>
        <end position="33"/>
    </location>
</feature>
<feature type="strand" evidence="5">
    <location>
        <begin position="42"/>
        <end position="49"/>
    </location>
</feature>
<feature type="strand" evidence="5">
    <location>
        <begin position="52"/>
        <end position="58"/>
    </location>
</feature>
<feature type="strand" evidence="5">
    <location>
        <begin position="61"/>
        <end position="63"/>
    </location>
</feature>
<feature type="helix" evidence="5">
    <location>
        <begin position="71"/>
        <end position="73"/>
    </location>
</feature>
<feature type="helix" evidence="5">
    <location>
        <begin position="77"/>
        <end position="105"/>
    </location>
</feature>
<feature type="strand" evidence="5">
    <location>
        <begin position="115"/>
        <end position="124"/>
    </location>
</feature>
<feature type="strand" evidence="5">
    <location>
        <begin position="128"/>
        <end position="139"/>
    </location>
</feature>
<feature type="strand" evidence="5">
    <location>
        <begin position="142"/>
        <end position="147"/>
    </location>
</feature>
<feature type="strand" evidence="5">
    <location>
        <begin position="154"/>
        <end position="156"/>
    </location>
</feature>
<feature type="helix" evidence="5">
    <location>
        <begin position="159"/>
        <end position="170"/>
    </location>
</feature>
<feature type="helix" evidence="5">
    <location>
        <begin position="173"/>
        <end position="182"/>
    </location>
</feature>
<feature type="helix" evidence="5">
    <location>
        <begin position="184"/>
        <end position="195"/>
    </location>
</feature>
<feature type="helix" evidence="5">
    <location>
        <begin position="197"/>
        <end position="200"/>
    </location>
</feature>
<feature type="strand" evidence="5">
    <location>
        <begin position="207"/>
        <end position="214"/>
    </location>
</feature>
<feature type="strand" evidence="5">
    <location>
        <begin position="216"/>
        <end position="232"/>
    </location>
</feature>
<feature type="strand" evidence="5">
    <location>
        <begin position="235"/>
        <end position="240"/>
    </location>
</feature>
<feature type="turn" evidence="5">
    <location>
        <begin position="246"/>
        <end position="248"/>
    </location>
</feature>
<feature type="strand" evidence="5">
    <location>
        <begin position="249"/>
        <end position="251"/>
    </location>
</feature>
<feature type="strand" evidence="5">
    <location>
        <begin position="258"/>
        <end position="260"/>
    </location>
</feature>
<feature type="strand" evidence="5">
    <location>
        <begin position="262"/>
        <end position="271"/>
    </location>
</feature>
<feature type="strand" evidence="5">
    <location>
        <begin position="278"/>
        <end position="283"/>
    </location>
</feature>
<feature type="strand" evidence="5">
    <location>
        <begin position="287"/>
        <end position="289"/>
    </location>
</feature>
<feature type="strand" evidence="5">
    <location>
        <begin position="291"/>
        <end position="293"/>
    </location>
</feature>
<evidence type="ECO:0000250" key="1"/>
<evidence type="ECO:0000255" key="2"/>
<evidence type="ECO:0000255" key="3">
    <source>
        <dbReference type="PROSITE-ProRule" id="PRU00114"/>
    </source>
</evidence>
<evidence type="ECO:0000305" key="4"/>
<evidence type="ECO:0007829" key="5">
    <source>
        <dbReference type="PDB" id="1K8D"/>
    </source>
</evidence>
<sequence>MALTMLLLLVAAALTLIETRAGQHSLQYFHTAVSRPGLGEPWFISVGYVDDTQFVRFDSDAENPRMEPRARWMEQEGPEYWERETQIAKGHEQSFRGSLRTAQSYYNQSKGGSHTLQWMYGCDMGSDGRLLRGYLQFAYEGRDYIALNEDLKTWTAVDMAAQITRRKWEQAGIAEKDQAYLEGTCMQSLRRYLQLGKETLLRTDPPKAHVTHHPRSYGAVTLRCWALGFYPADITLTWQLNGEELTQDMELVETRPAGDGTFQKWASVVVPLGKEQNYTCHVNHEGLPEPLTLRWGRWEPPPYTVSNMATIAVVVDLGAVAIIGAVVAFVMNRR</sequence>
<reference key="1">
    <citation type="journal article" date="1985" name="EMBO J.">
        <title>Duplicated gene pairs and alleles of class I genes in the Qa2 region of the murine major histocompatibility complex: a comparison.</title>
        <authorList>
            <person name="Devlin J.J."/>
            <person name="Weiss E.H."/>
            <person name="Paulson M."/>
            <person name="Flavell R.A."/>
        </authorList>
    </citation>
    <scope>NUCLEOTIDE SEQUENCE [GENOMIC DNA]</scope>
    <source>
        <strain>C57BL/10</strain>
    </source>
</reference>
<reference key="2">
    <citation type="journal article" date="1987" name="J. Exp. Med.">
        <title>Tissue-specific expression of cell-surface Qa-2 antigen from a transfected Q7b gene of C57BL/10 mice.</title>
        <authorList>
            <person name="Waneck G.L."/>
            <person name="Sherman D.H."/>
            <person name="Calvin S."/>
            <person name="Allen H."/>
            <person name="Flavell R.A."/>
        </authorList>
    </citation>
    <scope>NUCLEOTIDE SEQUENCE [MRNA]</scope>
    <source>
        <strain>C57BL/10</strain>
    </source>
</reference>
<reference key="3">
    <citation type="journal article" date="1981" name="Cell">
        <title>A pseudogene homologous to mouse transplantation antigens: transplantation antigens are encoded by eight exons that correlate with protein domains.</title>
        <authorList>
            <person name="Steinmetz M."/>
            <person name="Moore K.W."/>
            <person name="Frelinger J.G."/>
            <person name="Sher B.T."/>
            <person name="Shen F.W."/>
            <person name="Boyse E.A."/>
            <person name="Hood L."/>
        </authorList>
    </citation>
    <scope>NUCLEOTIDE SEQUENCE</scope>
</reference>
<reference key="4">
    <citation type="journal article" date="1990" name="EMBO J.">
        <title>Activated T cells transcribe an alternatively spliced mRNA encoding a soluble form of Qa-2 antigen.</title>
        <authorList>
            <person name="Ulker N."/>
            <person name="Lewis K.D."/>
            <person name="Hood L.E."/>
            <person name="Stroynowski I."/>
        </authorList>
    </citation>
    <scope>NUCLEOTIDE SEQUENCE OF 292-334</scope>
</reference>
<reference key="5">
    <citation type="journal article" date="1989" name="J. Exp. Med.">
        <title>Comparison of exon 5 sequences from 35 class I genes of the BALB/c mouse.</title>
        <authorList>
            <person name="Brorson K.A."/>
            <person name="Hunt S.W. III"/>
            <person name="Hunkapiller T."/>
            <person name="Sun Y.H."/>
            <person name="Cheroutre H."/>
            <person name="Nickerson D.A."/>
            <person name="Hood L."/>
        </authorList>
    </citation>
    <scope>NUCLEOTIDE SEQUENCE OF 300-334</scope>
</reference>
<name>HA17_MOUSE</name>
<dbReference type="EMBL" id="X03210">
    <property type="protein sequence ID" value="CAA26954.1"/>
    <property type="molecule type" value="Genomic_DNA"/>
</dbReference>
<dbReference type="EMBL" id="X03441">
    <property type="protein sequence ID" value="CAA26954.1"/>
    <property type="status" value="JOINED"/>
    <property type="molecule type" value="Genomic_DNA"/>
</dbReference>
<dbReference type="EMBL" id="X05389">
    <property type="protein sequence ID" value="CAA28977.1"/>
    <property type="status" value="ALT_INIT"/>
    <property type="molecule type" value="mRNA"/>
</dbReference>
<dbReference type="EMBL" id="X57330">
    <property type="protein sequence ID" value="CAA40606.1"/>
    <property type="molecule type" value="mRNA"/>
</dbReference>
<dbReference type="CCDS" id="CCDS28697.1"/>
<dbReference type="PIR" id="A24582">
    <property type="entry name" value="A24582"/>
</dbReference>
<dbReference type="RefSeq" id="NP_034524.3">
    <property type="nucleotide sequence ID" value="NM_010394.4"/>
</dbReference>
<dbReference type="PDB" id="1K8D">
    <property type="method" value="X-ray"/>
    <property type="resolution" value="2.30 A"/>
    <property type="chains" value="A=22-295"/>
</dbReference>
<dbReference type="PDBsum" id="1K8D"/>
<dbReference type="SMR" id="P14429"/>
<dbReference type="FunCoup" id="P14429">
    <property type="interactions" value="747"/>
</dbReference>
<dbReference type="MINT" id="P14429"/>
<dbReference type="STRING" id="10090.ENSMUSP00000071843"/>
<dbReference type="GlyCosmos" id="P14429">
    <property type="glycosylation" value="2 sites, No reported glycans"/>
</dbReference>
<dbReference type="GlyGen" id="P14429">
    <property type="glycosylation" value="2 sites, 2 N-linked glycans (2 sites)"/>
</dbReference>
<dbReference type="iPTMnet" id="P14429"/>
<dbReference type="PhosphoSitePlus" id="P14429"/>
<dbReference type="jPOST" id="P14429"/>
<dbReference type="PaxDb" id="10090-ENSMUSP00000071843"/>
<dbReference type="ProteomicsDB" id="269799"/>
<dbReference type="DNASU" id="15018"/>
<dbReference type="Ensembl" id="ENSMUST00000071951.14">
    <property type="protein sequence ID" value="ENSMUSP00000071843.7"/>
    <property type="gene ID" value="ENSMUSG00000060550.18"/>
</dbReference>
<dbReference type="GeneID" id="15018"/>
<dbReference type="KEGG" id="mmu:15018"/>
<dbReference type="AGR" id="MGI:95936"/>
<dbReference type="CTD" id="15018"/>
<dbReference type="MGI" id="MGI:95936">
    <property type="gene designation" value="H2-Q7"/>
</dbReference>
<dbReference type="VEuPathDB" id="HostDB:ENSMUSG00000060550"/>
<dbReference type="eggNOG" id="ENOG502RQEK">
    <property type="taxonomic scope" value="Eukaryota"/>
</dbReference>
<dbReference type="GeneTree" id="ENSGT01120000271826"/>
<dbReference type="HOGENOM" id="CLU_047501_1_1_1"/>
<dbReference type="InParanoid" id="P14429"/>
<dbReference type="OMA" id="THTCVEW"/>
<dbReference type="OrthoDB" id="77324at9989"/>
<dbReference type="PhylomeDB" id="P14429"/>
<dbReference type="TreeFam" id="TF336617"/>
<dbReference type="Reactome" id="R-MMU-1236974">
    <property type="pathway name" value="ER-Phagosome pathway"/>
</dbReference>
<dbReference type="Reactome" id="R-MMU-1236977">
    <property type="pathway name" value="Endosomal/Vacuolar pathway"/>
</dbReference>
<dbReference type="Reactome" id="R-MMU-198933">
    <property type="pathway name" value="Immunoregulatory interactions between a Lymphoid and a non-Lymphoid cell"/>
</dbReference>
<dbReference type="Reactome" id="R-MMU-2172127">
    <property type="pathway name" value="DAP12 interactions"/>
</dbReference>
<dbReference type="Reactome" id="R-MMU-6798695">
    <property type="pathway name" value="Neutrophil degranulation"/>
</dbReference>
<dbReference type="Reactome" id="R-MMU-983170">
    <property type="pathway name" value="Antigen Presentation: Folding, assembly and peptide loading of class I MHC"/>
</dbReference>
<dbReference type="BioGRID-ORCS" id="15018">
    <property type="hits" value="5 hits in 78 CRISPR screens"/>
</dbReference>
<dbReference type="ChiTaRS" id="H2-Q7">
    <property type="organism name" value="mouse"/>
</dbReference>
<dbReference type="EvolutionaryTrace" id="P14429"/>
<dbReference type="PRO" id="PR:P14429"/>
<dbReference type="Proteomes" id="UP000000589">
    <property type="component" value="Chromosome 17"/>
</dbReference>
<dbReference type="RNAct" id="P14429">
    <property type="molecule type" value="protein"/>
</dbReference>
<dbReference type="Bgee" id="ENSMUSG00000060550">
    <property type="expression patterns" value="Expressed in zone of skin and 57 other cell types or tissues"/>
</dbReference>
<dbReference type="ExpressionAtlas" id="P14429">
    <property type="expression patterns" value="baseline and differential"/>
</dbReference>
<dbReference type="GO" id="GO:0098553">
    <property type="term" value="C:lumenal side of endoplasmic reticulum membrane"/>
    <property type="evidence" value="ECO:0000304"/>
    <property type="project" value="Reactome"/>
</dbReference>
<dbReference type="GO" id="GO:0042612">
    <property type="term" value="C:MHC class I protein complex"/>
    <property type="evidence" value="ECO:0007669"/>
    <property type="project" value="UniProtKB-KW"/>
</dbReference>
<dbReference type="GO" id="GO:0030670">
    <property type="term" value="C:phagocytic vesicle membrane"/>
    <property type="evidence" value="ECO:0000304"/>
    <property type="project" value="Reactome"/>
</dbReference>
<dbReference type="GO" id="GO:0002474">
    <property type="term" value="P:antigen processing and presentation of peptide antigen via MHC class I"/>
    <property type="evidence" value="ECO:0007669"/>
    <property type="project" value="UniProtKB-KW"/>
</dbReference>
<dbReference type="GO" id="GO:0071346">
    <property type="term" value="P:cellular response to type II interferon"/>
    <property type="evidence" value="ECO:0000314"/>
    <property type="project" value="MGI"/>
</dbReference>
<dbReference type="GO" id="GO:0007566">
    <property type="term" value="P:embryo implantation"/>
    <property type="evidence" value="ECO:0000314"/>
    <property type="project" value="MGI"/>
</dbReference>
<dbReference type="CDD" id="cd21014">
    <property type="entry name" value="IgC1_MHC_Ib_Qa-2"/>
    <property type="match status" value="1"/>
</dbReference>
<dbReference type="FunFam" id="2.60.40.10:FF:000014">
    <property type="entry name" value="H-2 class I histocompatibility antigen, alpha chain"/>
    <property type="match status" value="1"/>
</dbReference>
<dbReference type="FunFam" id="3.30.500.10:FF:000001">
    <property type="entry name" value="H-2 class I histocompatibility antigen, alpha chain"/>
    <property type="match status" value="1"/>
</dbReference>
<dbReference type="Gene3D" id="2.60.40.10">
    <property type="entry name" value="Immunoglobulins"/>
    <property type="match status" value="1"/>
</dbReference>
<dbReference type="Gene3D" id="3.30.500.10">
    <property type="entry name" value="MHC class I-like antigen recognition-like"/>
    <property type="match status" value="1"/>
</dbReference>
<dbReference type="InterPro" id="IPR007110">
    <property type="entry name" value="Ig-like_dom"/>
</dbReference>
<dbReference type="InterPro" id="IPR036179">
    <property type="entry name" value="Ig-like_dom_sf"/>
</dbReference>
<dbReference type="InterPro" id="IPR013783">
    <property type="entry name" value="Ig-like_fold"/>
</dbReference>
<dbReference type="InterPro" id="IPR003006">
    <property type="entry name" value="Ig/MHC_CS"/>
</dbReference>
<dbReference type="InterPro" id="IPR003597">
    <property type="entry name" value="Ig_C1-set"/>
</dbReference>
<dbReference type="InterPro" id="IPR050208">
    <property type="entry name" value="MHC_class-I_related"/>
</dbReference>
<dbReference type="InterPro" id="IPR011161">
    <property type="entry name" value="MHC_I-like_Ag-recog"/>
</dbReference>
<dbReference type="InterPro" id="IPR037055">
    <property type="entry name" value="MHC_I-like_Ag-recog_sf"/>
</dbReference>
<dbReference type="InterPro" id="IPR011162">
    <property type="entry name" value="MHC_I/II-like_Ag-recog"/>
</dbReference>
<dbReference type="InterPro" id="IPR001039">
    <property type="entry name" value="MHC_I_a_a1/a2"/>
</dbReference>
<dbReference type="PANTHER" id="PTHR16675:SF251">
    <property type="entry name" value="HLA CLASS I HISTOCOMPATIBILITY ANTIGEN, C ALPHA CHAIN"/>
    <property type="match status" value="1"/>
</dbReference>
<dbReference type="PANTHER" id="PTHR16675">
    <property type="entry name" value="MHC CLASS I-RELATED"/>
    <property type="match status" value="1"/>
</dbReference>
<dbReference type="Pfam" id="PF07654">
    <property type="entry name" value="C1-set"/>
    <property type="match status" value="1"/>
</dbReference>
<dbReference type="Pfam" id="PF00129">
    <property type="entry name" value="MHC_I"/>
    <property type="match status" value="1"/>
</dbReference>
<dbReference type="PRINTS" id="PR01638">
    <property type="entry name" value="MHCCLASSI"/>
</dbReference>
<dbReference type="SMART" id="SM00407">
    <property type="entry name" value="IGc1"/>
    <property type="match status" value="1"/>
</dbReference>
<dbReference type="SUPFAM" id="SSF48726">
    <property type="entry name" value="Immunoglobulin"/>
    <property type="match status" value="1"/>
</dbReference>
<dbReference type="SUPFAM" id="SSF54452">
    <property type="entry name" value="MHC antigen-recognition domain"/>
    <property type="match status" value="1"/>
</dbReference>
<dbReference type="PROSITE" id="PS50835">
    <property type="entry name" value="IG_LIKE"/>
    <property type="match status" value="1"/>
</dbReference>
<dbReference type="PROSITE" id="PS00290">
    <property type="entry name" value="IG_MHC"/>
    <property type="match status" value="1"/>
</dbReference>